<accession>Q32516</accession>
<accession>Q2A7C1</accession>
<accession>Q2MI53</accession>
<comment type="function">
    <text evidence="1">NDH shuttles electrons from NAD(P)H:plastoquinone, via FMN and iron-sulfur (Fe-S) centers, to quinones in the photosynthetic chain and possibly in a chloroplast respiratory chain. The immediate electron acceptor for the enzyme in this species is believed to be plastoquinone. Couples the redox reaction to proton translocation, and thus conserves the redox energy in a proton gradient (By similarity).</text>
</comment>
<comment type="catalytic activity">
    <reaction>
        <text>a plastoquinone + NADH + (n+1) H(+)(in) = a plastoquinol + NAD(+) + n H(+)(out)</text>
        <dbReference type="Rhea" id="RHEA:42608"/>
        <dbReference type="Rhea" id="RHEA-COMP:9561"/>
        <dbReference type="Rhea" id="RHEA-COMP:9562"/>
        <dbReference type="ChEBI" id="CHEBI:15378"/>
        <dbReference type="ChEBI" id="CHEBI:17757"/>
        <dbReference type="ChEBI" id="CHEBI:57540"/>
        <dbReference type="ChEBI" id="CHEBI:57945"/>
        <dbReference type="ChEBI" id="CHEBI:62192"/>
    </reaction>
</comment>
<comment type="catalytic activity">
    <reaction>
        <text>a plastoquinone + NADPH + (n+1) H(+)(in) = a plastoquinol + NADP(+) + n H(+)(out)</text>
        <dbReference type="Rhea" id="RHEA:42612"/>
        <dbReference type="Rhea" id="RHEA-COMP:9561"/>
        <dbReference type="Rhea" id="RHEA-COMP:9562"/>
        <dbReference type="ChEBI" id="CHEBI:15378"/>
        <dbReference type="ChEBI" id="CHEBI:17757"/>
        <dbReference type="ChEBI" id="CHEBI:57783"/>
        <dbReference type="ChEBI" id="CHEBI:58349"/>
        <dbReference type="ChEBI" id="CHEBI:62192"/>
    </reaction>
</comment>
<comment type="subunit">
    <text evidence="1">NDH is composed of at least 16 different subunits, 5 of which are encoded in the nucleus.</text>
</comment>
<comment type="subcellular location">
    <subcellularLocation>
        <location evidence="1">Plastid</location>
        <location evidence="1">Chloroplast thylakoid membrane</location>
        <topology evidence="1">Multi-pass membrane protein</topology>
    </subcellularLocation>
</comment>
<comment type="similarity">
    <text evidence="3">Belongs to the complex I subunit 5 family.</text>
</comment>
<proteinExistence type="inferred from homology"/>
<geneLocation type="chloroplast"/>
<organism>
    <name type="scientific">Solanum lycopersicum</name>
    <name type="common">Tomato</name>
    <name type="synonym">Lycopersicon esculentum</name>
    <dbReference type="NCBI Taxonomy" id="4081"/>
    <lineage>
        <taxon>Eukaryota</taxon>
        <taxon>Viridiplantae</taxon>
        <taxon>Streptophyta</taxon>
        <taxon>Embryophyta</taxon>
        <taxon>Tracheophyta</taxon>
        <taxon>Spermatophyta</taxon>
        <taxon>Magnoliopsida</taxon>
        <taxon>eudicotyledons</taxon>
        <taxon>Gunneridae</taxon>
        <taxon>Pentapetalae</taxon>
        <taxon>asterids</taxon>
        <taxon>lamiids</taxon>
        <taxon>Solanales</taxon>
        <taxon>Solanaceae</taxon>
        <taxon>Solanoideae</taxon>
        <taxon>Solaneae</taxon>
        <taxon>Solanum</taxon>
        <taxon>Solanum subgen. Lycopersicon</taxon>
    </lineage>
</organism>
<gene>
    <name type="primary">ndhF</name>
</gene>
<feature type="chain" id="PRO_0000118190" description="NAD(P)H-quinone oxidoreductase subunit 5, chloroplastic">
    <location>
        <begin position="1"/>
        <end position="737"/>
    </location>
</feature>
<feature type="transmembrane region" description="Helical" evidence="2">
    <location>
        <begin position="9"/>
        <end position="29"/>
    </location>
</feature>
<feature type="transmembrane region" description="Helical" evidence="2">
    <location>
        <begin position="40"/>
        <end position="60"/>
    </location>
</feature>
<feature type="transmembrane region" description="Helical" evidence="2">
    <location>
        <begin position="89"/>
        <end position="109"/>
    </location>
</feature>
<feature type="transmembrane region" description="Helical" evidence="2">
    <location>
        <begin position="125"/>
        <end position="145"/>
    </location>
</feature>
<feature type="transmembrane region" description="Helical" evidence="2">
    <location>
        <begin position="147"/>
        <end position="167"/>
    </location>
</feature>
<feature type="transmembrane region" description="Helical" evidence="2">
    <location>
        <begin position="185"/>
        <end position="205"/>
    </location>
</feature>
<feature type="transmembrane region" description="Helical" evidence="2">
    <location>
        <begin position="219"/>
        <end position="239"/>
    </location>
</feature>
<feature type="transmembrane region" description="Helical" evidence="2">
    <location>
        <begin position="258"/>
        <end position="278"/>
    </location>
</feature>
<feature type="transmembrane region" description="Helical" evidence="2">
    <location>
        <begin position="286"/>
        <end position="306"/>
    </location>
</feature>
<feature type="transmembrane region" description="Helical" evidence="2">
    <location>
        <begin position="327"/>
        <end position="347"/>
    </location>
</feature>
<feature type="transmembrane region" description="Helical" evidence="2">
    <location>
        <begin position="354"/>
        <end position="374"/>
    </location>
</feature>
<feature type="transmembrane region" description="Helical" evidence="2">
    <location>
        <begin position="396"/>
        <end position="416"/>
    </location>
</feature>
<feature type="transmembrane region" description="Helical" evidence="2">
    <location>
        <begin position="425"/>
        <end position="445"/>
    </location>
</feature>
<feature type="transmembrane region" description="Helical" evidence="2">
    <location>
        <begin position="543"/>
        <end position="563"/>
    </location>
</feature>
<feature type="transmembrane region" description="Helical" evidence="2">
    <location>
        <begin position="602"/>
        <end position="622"/>
    </location>
</feature>
<feature type="transmembrane region" description="Helical" evidence="2">
    <location>
        <begin position="717"/>
        <end position="737"/>
    </location>
</feature>
<protein>
    <recommendedName>
        <fullName>NAD(P)H-quinone oxidoreductase subunit 5, chloroplastic</fullName>
        <ecNumber>7.1.1.-</ecNumber>
    </recommendedName>
    <alternativeName>
        <fullName>NAD(P)H dehydrogenase subunit 5</fullName>
    </alternativeName>
    <alternativeName>
        <fullName>NADH-plastoquinone oxidoreductase subunit 5</fullName>
    </alternativeName>
</protein>
<dbReference type="EC" id="7.1.1.-"/>
<dbReference type="EMBL" id="DQ347959">
    <property type="protein sequence ID" value="ABC56348.1"/>
    <property type="molecule type" value="Genomic_DNA"/>
</dbReference>
<dbReference type="EMBL" id="AM087200">
    <property type="protein sequence ID" value="CAJ32442.1"/>
    <property type="molecule type" value="Genomic_DNA"/>
</dbReference>
<dbReference type="EMBL" id="U08921">
    <property type="protein sequence ID" value="AAA18603.1"/>
    <property type="molecule type" value="Genomic_DNA"/>
</dbReference>
<dbReference type="RefSeq" id="AP_004976.1">
    <property type="nucleotide sequence ID" value="AC_000188.1"/>
</dbReference>
<dbReference type="RefSeq" id="YP_008563136.1">
    <property type="nucleotide sequence ID" value="NC_007898.3"/>
</dbReference>
<dbReference type="SMR" id="Q32516"/>
<dbReference type="FunCoup" id="Q32516">
    <property type="interactions" value="15"/>
</dbReference>
<dbReference type="STRING" id="4081.Q32516"/>
<dbReference type="PaxDb" id="4081-Solyc03g013620.1.1"/>
<dbReference type="GeneID" id="3950404"/>
<dbReference type="KEGG" id="sly:3950404"/>
<dbReference type="eggNOG" id="KOG4668">
    <property type="taxonomic scope" value="Eukaryota"/>
</dbReference>
<dbReference type="InParanoid" id="Q32516"/>
<dbReference type="OrthoDB" id="543408at2759"/>
<dbReference type="Proteomes" id="UP000004994">
    <property type="component" value="Chloroplast"/>
</dbReference>
<dbReference type="ExpressionAtlas" id="Q32516">
    <property type="expression patterns" value="baseline"/>
</dbReference>
<dbReference type="GO" id="GO:0009535">
    <property type="term" value="C:chloroplast thylakoid membrane"/>
    <property type="evidence" value="ECO:0007669"/>
    <property type="project" value="UniProtKB-SubCell"/>
</dbReference>
<dbReference type="GO" id="GO:0008137">
    <property type="term" value="F:NADH dehydrogenase (ubiquinone) activity"/>
    <property type="evidence" value="ECO:0007669"/>
    <property type="project" value="InterPro"/>
</dbReference>
<dbReference type="GO" id="GO:0048038">
    <property type="term" value="F:quinone binding"/>
    <property type="evidence" value="ECO:0007669"/>
    <property type="project" value="UniProtKB-KW"/>
</dbReference>
<dbReference type="GO" id="GO:0042773">
    <property type="term" value="P:ATP synthesis coupled electron transport"/>
    <property type="evidence" value="ECO:0007669"/>
    <property type="project" value="InterPro"/>
</dbReference>
<dbReference type="GO" id="GO:0015990">
    <property type="term" value="P:electron transport coupled proton transport"/>
    <property type="evidence" value="ECO:0000318"/>
    <property type="project" value="GO_Central"/>
</dbReference>
<dbReference type="Gene3D" id="1.20.5.2700">
    <property type="match status" value="1"/>
</dbReference>
<dbReference type="InterPro" id="IPR002128">
    <property type="entry name" value="NADH_UbQ_OxRdtase_chlpt_su5_C"/>
</dbReference>
<dbReference type="InterPro" id="IPR018393">
    <property type="entry name" value="NADHpl_OxRdtase_5_subgr"/>
</dbReference>
<dbReference type="InterPro" id="IPR001750">
    <property type="entry name" value="ND/Mrp_TM"/>
</dbReference>
<dbReference type="InterPro" id="IPR003945">
    <property type="entry name" value="NU5C-like"/>
</dbReference>
<dbReference type="InterPro" id="IPR001516">
    <property type="entry name" value="Proton_antipo_N"/>
</dbReference>
<dbReference type="NCBIfam" id="TIGR01974">
    <property type="entry name" value="NDH_I_L"/>
    <property type="match status" value="1"/>
</dbReference>
<dbReference type="NCBIfam" id="NF005141">
    <property type="entry name" value="PRK06590.1"/>
    <property type="match status" value="1"/>
</dbReference>
<dbReference type="PANTHER" id="PTHR42829">
    <property type="entry name" value="NADH-UBIQUINONE OXIDOREDUCTASE CHAIN 5"/>
    <property type="match status" value="1"/>
</dbReference>
<dbReference type="PANTHER" id="PTHR42829:SF2">
    <property type="entry name" value="NADH-UBIQUINONE OXIDOREDUCTASE CHAIN 5"/>
    <property type="match status" value="1"/>
</dbReference>
<dbReference type="Pfam" id="PF01010">
    <property type="entry name" value="Proton_antipo_C"/>
    <property type="match status" value="1"/>
</dbReference>
<dbReference type="Pfam" id="PF00361">
    <property type="entry name" value="Proton_antipo_M"/>
    <property type="match status" value="1"/>
</dbReference>
<dbReference type="Pfam" id="PF00662">
    <property type="entry name" value="Proton_antipo_N"/>
    <property type="match status" value="1"/>
</dbReference>
<dbReference type="PRINTS" id="PR01434">
    <property type="entry name" value="NADHDHGNASE5"/>
</dbReference>
<dbReference type="PRINTS" id="PR01435">
    <property type="entry name" value="NPOXDRDTASE5"/>
</dbReference>
<keyword id="KW-0150">Chloroplast</keyword>
<keyword id="KW-0472">Membrane</keyword>
<keyword id="KW-0520">NAD</keyword>
<keyword id="KW-0521">NADP</keyword>
<keyword id="KW-0934">Plastid</keyword>
<keyword id="KW-0618">Plastoquinone</keyword>
<keyword id="KW-0874">Quinone</keyword>
<keyword id="KW-1185">Reference proteome</keyword>
<keyword id="KW-0793">Thylakoid</keyword>
<keyword id="KW-1278">Translocase</keyword>
<keyword id="KW-0812">Transmembrane</keyword>
<keyword id="KW-1133">Transmembrane helix</keyword>
<keyword id="KW-0813">Transport</keyword>
<name>NU5C_SOLLC</name>
<evidence type="ECO:0000250" key="1"/>
<evidence type="ECO:0000255" key="2"/>
<evidence type="ECO:0000305" key="3"/>
<sequence length="737" mass="83283">MEQTYEYAWIIPFIPLPVPMLIGAGLILFPTATKRFRRMWAFQSVLLLSIVMIFSIYLSIQQINSSSVYQYVWSWIINNDFSLDFGYLIDPLTSIMSILITTVGIMVLIYSDNYMAHDQGYLRFFAYMSFFSTSMLGLVTSSNLIQIYIFWELVGLCSYLLIGFWFTRPVAANACQKAFVTNRVGDFGLLLGILGFYWITGSFEFRDLFEIFNNLIYNNELNFLFVTLCAVLLFAGAVAKSAQFPLHVWLPDAMEGPTPISALIHAATMVAAGIFLVARLLPLFRVIPYIMYLISVIGIITVLLGATLALAQKDIKRGLAYSTMSQLGYMMLALGMGSYRSALFHLITHAYSKALLFLGSGSIIHSMETIVGYSPAKSQNMGLMGGLRKHVPITKITFLLGTLSLCGIPPLACFWSKDEILNDSWLYSPIFAIIAWATAGLTAFYMFRIYLLTFEGHLNAHFQNYGGKQKIPFYSISLWGKNGVKKNSCLLTMNNNESTYFLSKTKYPIAKNGRKMTRPFMTIAHFKHKAVSSYPYESDNTMLFPIFVLGLFTLFVGAIGIPFNQEGVNLDILSKWLAPSINLLHPKSNNSLDWNEFLKDAVVSVSIAYFGIFIASFLYKPIYSSLKNLEFINSFVKKGPKRILWDKILNGIYDWSYNRAYIDAFYTRFFVGGIRGLAEFTHFVDRRVIDGMTNGVGVISFIVGEGIKYIGGGRISSYLFLYLAYVSVFLLVYYLLF</sequence>
<reference key="1">
    <citation type="journal article" date="2006" name="Theor. Appl. Genet.">
        <title>Complete chloroplast genome sequences of Solanum bulbocastanum, Solanum lycopersicum and comparative analyses with other Solanaceae genomes.</title>
        <authorList>
            <person name="Daniell H."/>
            <person name="Lee S.-B."/>
            <person name="Grevich J."/>
            <person name="Saski C."/>
            <person name="Quesada-Vargas T."/>
            <person name="Guda C."/>
            <person name="Tomkins J."/>
            <person name="Jansen R.K."/>
        </authorList>
    </citation>
    <scope>NUCLEOTIDE SEQUENCE [LARGE SCALE GENOMIC DNA]</scope>
    <source>
        <strain>cv. LA3023</strain>
    </source>
</reference>
<reference key="2">
    <citation type="journal article" date="2006" name="J. Mol. Evol.">
        <title>Sequence of the tomato chloroplast DNA and evolutionary comparison of solanaceous plastid genomes.</title>
        <authorList>
            <person name="Kahlau S."/>
            <person name="Aspinall S."/>
            <person name="Gray J.C."/>
            <person name="Bock R."/>
        </authorList>
    </citation>
    <scope>NUCLEOTIDE SEQUENCE [LARGE SCALE GENOMIC DNA]</scope>
    <source>
        <strain>cv. IPA-6</strain>
    </source>
</reference>
<reference key="3">
    <citation type="journal article" date="1994" name="Syst. Biol.">
        <title>Combining data in phylogenetic systematics: an empirical approach using three molecular datasets in the Solanaceae.</title>
        <authorList>
            <person name="Olmstead R.G."/>
            <person name="Sweere J.A."/>
        </authorList>
    </citation>
    <scope>NUCLEOTIDE SEQUENCE [GENOMIC DNA] OF 9-703</scope>
</reference>